<accession>Q6NET4</accession>
<organism>
    <name type="scientific">Corynebacterium diphtheriae (strain ATCC 700971 / NCTC 13129 / Biotype gravis)</name>
    <dbReference type="NCBI Taxonomy" id="257309"/>
    <lineage>
        <taxon>Bacteria</taxon>
        <taxon>Bacillati</taxon>
        <taxon>Actinomycetota</taxon>
        <taxon>Actinomycetes</taxon>
        <taxon>Mycobacteriales</taxon>
        <taxon>Corynebacteriaceae</taxon>
        <taxon>Corynebacterium</taxon>
    </lineage>
</organism>
<protein>
    <recommendedName>
        <fullName evidence="2">tRNA (guanine-N(7)-)-methyltransferase</fullName>
        <ecNumber evidence="2">2.1.1.33</ecNumber>
    </recommendedName>
    <alternativeName>
        <fullName evidence="2">tRNA (guanine(46)-N(7))-methyltransferase</fullName>
    </alternativeName>
    <alternativeName>
        <fullName evidence="2">tRNA(m7G46)-methyltransferase</fullName>
    </alternativeName>
</protein>
<proteinExistence type="inferred from homology"/>
<dbReference type="EC" id="2.1.1.33" evidence="2"/>
<dbReference type="EMBL" id="BX248360">
    <property type="protein sequence ID" value="CAE50708.1"/>
    <property type="molecule type" value="Genomic_DNA"/>
</dbReference>
<dbReference type="RefSeq" id="WP_010935643.1">
    <property type="nucleotide sequence ID" value="NC_002935.2"/>
</dbReference>
<dbReference type="SMR" id="Q6NET4"/>
<dbReference type="STRING" id="257309.DIP2181"/>
<dbReference type="KEGG" id="cdi:DIP2181"/>
<dbReference type="HOGENOM" id="CLU_050910_0_2_11"/>
<dbReference type="UniPathway" id="UPA00989"/>
<dbReference type="Proteomes" id="UP000002198">
    <property type="component" value="Chromosome"/>
</dbReference>
<dbReference type="GO" id="GO:0043527">
    <property type="term" value="C:tRNA methyltransferase complex"/>
    <property type="evidence" value="ECO:0007669"/>
    <property type="project" value="TreeGrafter"/>
</dbReference>
<dbReference type="GO" id="GO:0008176">
    <property type="term" value="F:tRNA (guanine(46)-N7)-methyltransferase activity"/>
    <property type="evidence" value="ECO:0007669"/>
    <property type="project" value="UniProtKB-UniRule"/>
</dbReference>
<dbReference type="CDD" id="cd02440">
    <property type="entry name" value="AdoMet_MTases"/>
    <property type="match status" value="1"/>
</dbReference>
<dbReference type="Gene3D" id="3.40.50.150">
    <property type="entry name" value="Vaccinia Virus protein VP39"/>
    <property type="match status" value="1"/>
</dbReference>
<dbReference type="HAMAP" id="MF_01057">
    <property type="entry name" value="tRNA_methyltr_TrmB"/>
    <property type="match status" value="1"/>
</dbReference>
<dbReference type="InterPro" id="IPR029063">
    <property type="entry name" value="SAM-dependent_MTases_sf"/>
</dbReference>
<dbReference type="InterPro" id="IPR003358">
    <property type="entry name" value="tRNA_(Gua-N-7)_MeTrfase_Trmb"/>
</dbReference>
<dbReference type="InterPro" id="IPR055361">
    <property type="entry name" value="tRNA_methyltr_TrmB_bact"/>
</dbReference>
<dbReference type="NCBIfam" id="TIGR00091">
    <property type="entry name" value="tRNA (guanosine(46)-N7)-methyltransferase TrmB"/>
    <property type="match status" value="1"/>
</dbReference>
<dbReference type="PANTHER" id="PTHR23417">
    <property type="entry name" value="3-DEOXY-D-MANNO-OCTULOSONIC-ACID TRANSFERASE/TRNA GUANINE-N 7 - -METHYLTRANSFERASE"/>
    <property type="match status" value="1"/>
</dbReference>
<dbReference type="PANTHER" id="PTHR23417:SF14">
    <property type="entry name" value="PENTACOTRIPEPTIDE-REPEAT REGION OF PRORP DOMAIN-CONTAINING PROTEIN"/>
    <property type="match status" value="1"/>
</dbReference>
<dbReference type="Pfam" id="PF02390">
    <property type="entry name" value="Methyltransf_4"/>
    <property type="match status" value="1"/>
</dbReference>
<dbReference type="SUPFAM" id="SSF53335">
    <property type="entry name" value="S-adenosyl-L-methionine-dependent methyltransferases"/>
    <property type="match status" value="1"/>
</dbReference>
<dbReference type="PROSITE" id="PS51625">
    <property type="entry name" value="SAM_MT_TRMB"/>
    <property type="match status" value="1"/>
</dbReference>
<name>TRMB_CORDI</name>
<reference key="1">
    <citation type="journal article" date="2003" name="Nucleic Acids Res.">
        <title>The complete genome sequence and analysis of Corynebacterium diphtheriae NCTC13129.</title>
        <authorList>
            <person name="Cerdeno-Tarraga A.-M."/>
            <person name="Efstratiou A."/>
            <person name="Dover L.G."/>
            <person name="Holden M.T.G."/>
            <person name="Pallen M.J."/>
            <person name="Bentley S.D."/>
            <person name="Besra G.S."/>
            <person name="Churcher C.M."/>
            <person name="James K.D."/>
            <person name="De Zoysa A."/>
            <person name="Chillingworth T."/>
            <person name="Cronin A."/>
            <person name="Dowd L."/>
            <person name="Feltwell T."/>
            <person name="Hamlin N."/>
            <person name="Holroyd S."/>
            <person name="Jagels K."/>
            <person name="Moule S."/>
            <person name="Quail M.A."/>
            <person name="Rabbinowitsch E."/>
            <person name="Rutherford K.M."/>
            <person name="Thomson N.R."/>
            <person name="Unwin L."/>
            <person name="Whitehead S."/>
            <person name="Barrell B.G."/>
            <person name="Parkhill J."/>
        </authorList>
    </citation>
    <scope>NUCLEOTIDE SEQUENCE [LARGE SCALE GENOMIC DNA]</scope>
    <source>
        <strain>ATCC 700971 / NCTC 13129 / Biotype gravis</strain>
    </source>
</reference>
<feature type="chain" id="PRO_0000171322" description="tRNA (guanine-N(7)-)-methyltransferase">
    <location>
        <begin position="1"/>
        <end position="259"/>
    </location>
</feature>
<feature type="region of interest" description="Disordered" evidence="3">
    <location>
        <begin position="1"/>
        <end position="29"/>
    </location>
</feature>
<feature type="compositionally biased region" description="Basic and acidic residues" evidence="3">
    <location>
        <begin position="1"/>
        <end position="11"/>
    </location>
</feature>
<feature type="active site" evidence="1">
    <location>
        <position position="164"/>
    </location>
</feature>
<feature type="binding site" evidence="2">
    <location>
        <position position="89"/>
    </location>
    <ligand>
        <name>S-adenosyl-L-methionine</name>
        <dbReference type="ChEBI" id="CHEBI:59789"/>
    </ligand>
</feature>
<feature type="binding site" evidence="2">
    <location>
        <position position="114"/>
    </location>
    <ligand>
        <name>S-adenosyl-L-methionine</name>
        <dbReference type="ChEBI" id="CHEBI:59789"/>
    </ligand>
</feature>
<feature type="binding site" evidence="2">
    <location>
        <position position="141"/>
    </location>
    <ligand>
        <name>S-adenosyl-L-methionine</name>
        <dbReference type="ChEBI" id="CHEBI:59789"/>
    </ligand>
</feature>
<feature type="binding site" evidence="2">
    <location>
        <position position="164"/>
    </location>
    <ligand>
        <name>S-adenosyl-L-methionine</name>
        <dbReference type="ChEBI" id="CHEBI:59789"/>
    </ligand>
</feature>
<feature type="binding site" evidence="2">
    <location>
        <position position="168"/>
    </location>
    <ligand>
        <name>substrate</name>
    </ligand>
</feature>
<feature type="binding site" evidence="2">
    <location>
        <position position="200"/>
    </location>
    <ligand>
        <name>substrate</name>
    </ligand>
</feature>
<feature type="binding site" evidence="2">
    <location>
        <begin position="238"/>
        <end position="241"/>
    </location>
    <ligand>
        <name>substrate</name>
    </ligand>
</feature>
<keyword id="KW-0489">Methyltransferase</keyword>
<keyword id="KW-1185">Reference proteome</keyword>
<keyword id="KW-0949">S-adenosyl-L-methionine</keyword>
<keyword id="KW-0808">Transferase</keyword>
<keyword id="KW-0819">tRNA processing</keyword>
<evidence type="ECO:0000250" key="1"/>
<evidence type="ECO:0000255" key="2">
    <source>
        <dbReference type="HAMAP-Rule" id="MF_01057"/>
    </source>
</evidence>
<evidence type="ECO:0000256" key="3">
    <source>
        <dbReference type="SAM" id="MobiDB-lite"/>
    </source>
</evidence>
<gene>
    <name evidence="2" type="primary">trmB</name>
    <name type="ordered locus">DIP2181</name>
</gene>
<sequence length="259" mass="29200">MSNTDNSDKNTKPTGYRPPQTDFNTEFGNNLDYPRLGSVSFRRGTLTDNQESLWDANWPILGKDLTDAEDQRIDVAEWFGRCGHKTILEIGSGTGTSTAAMAPLEADTNIIAVELYKPGLAKLLGAVVRGDISNVRMIRGDGVEVLTRMLPEESLDGVRIYFPDPWPKARHHKRRIIQSGVLNLIASRLKPGGVLHVATDHADYAEWITELVNVEPQLEFMGWPWDECPQLTDRQVITKFEGKGLDKDHTITEFLWRRK</sequence>
<comment type="function">
    <text evidence="2">Catalyzes the formation of N(7)-methylguanine at position 46 (m7G46) in tRNA.</text>
</comment>
<comment type="catalytic activity">
    <reaction evidence="2">
        <text>guanosine(46) in tRNA + S-adenosyl-L-methionine = N(7)-methylguanosine(46) in tRNA + S-adenosyl-L-homocysteine</text>
        <dbReference type="Rhea" id="RHEA:42708"/>
        <dbReference type="Rhea" id="RHEA-COMP:10188"/>
        <dbReference type="Rhea" id="RHEA-COMP:10189"/>
        <dbReference type="ChEBI" id="CHEBI:57856"/>
        <dbReference type="ChEBI" id="CHEBI:59789"/>
        <dbReference type="ChEBI" id="CHEBI:74269"/>
        <dbReference type="ChEBI" id="CHEBI:74480"/>
        <dbReference type="EC" id="2.1.1.33"/>
    </reaction>
</comment>
<comment type="pathway">
    <text evidence="2">tRNA modification; N(7)-methylguanine-tRNA biosynthesis.</text>
</comment>
<comment type="similarity">
    <text evidence="2">Belongs to the class I-like SAM-binding methyltransferase superfamily. TrmB family.</text>
</comment>